<feature type="signal peptide" evidence="3">
    <location>
        <begin position="1"/>
        <end position="19"/>
    </location>
</feature>
<feature type="chain" id="PRO_5004326165" description="Berberine bridge enzyme-like 7">
    <location>
        <begin position="20"/>
        <end position="529"/>
    </location>
</feature>
<feature type="domain" description="FAD-binding PCMH-type" evidence="5">
    <location>
        <begin position="69"/>
        <end position="247"/>
    </location>
</feature>
<feature type="glycosylation site" description="N-linked (GlcNAc...) asparagine" evidence="4">
    <location>
        <position position="52"/>
    </location>
</feature>
<feature type="glycosylation site" description="N-linked (GlcNAc...) asparagine" evidence="4">
    <location>
        <position position="257"/>
    </location>
</feature>
<feature type="glycosylation site" description="N-linked (GlcNAc...) asparagine" evidence="4">
    <location>
        <position position="341"/>
    </location>
</feature>
<feature type="glycosylation site" description="N-linked (GlcNAc...) asparagine" evidence="4">
    <location>
        <position position="439"/>
    </location>
</feature>
<feature type="disulfide bond" evidence="2">
    <location>
        <begin position="32"/>
        <end position="95"/>
    </location>
</feature>
<feature type="cross-link" description="6-(S-cysteinyl)-8alpha-(pros-histidyl)-FAD (His-Cys)" evidence="1">
    <location>
        <begin position="110"/>
        <end position="172"/>
    </location>
</feature>
<gene>
    <name evidence="8" type="primary">FOX5</name>
    <name evidence="10" type="ordered locus">At1g26420</name>
    <name evidence="11" type="ORF">T1K7.20</name>
</gene>
<organism>
    <name type="scientific">Arabidopsis thaliana</name>
    <name type="common">Mouse-ear cress</name>
    <dbReference type="NCBI Taxonomy" id="3702"/>
    <lineage>
        <taxon>Eukaryota</taxon>
        <taxon>Viridiplantae</taxon>
        <taxon>Streptophyta</taxon>
        <taxon>Embryophyta</taxon>
        <taxon>Tracheophyta</taxon>
        <taxon>Spermatophyta</taxon>
        <taxon>Magnoliopsida</taxon>
        <taxon>eudicotyledons</taxon>
        <taxon>Gunneridae</taxon>
        <taxon>Pentapetalae</taxon>
        <taxon>rosids</taxon>
        <taxon>malvids</taxon>
        <taxon>Brassicales</taxon>
        <taxon>Brassicaceae</taxon>
        <taxon>Camelineae</taxon>
        <taxon>Arabidopsis</taxon>
    </lineage>
</organism>
<proteinExistence type="inferred from homology"/>
<protein>
    <recommendedName>
        <fullName evidence="7">Berberine bridge enzyme-like 7</fullName>
        <shortName evidence="7">AtBBE-like 7</shortName>
        <ecNumber evidence="1">1.1.1.-</ecNumber>
    </recommendedName>
    <alternativeName>
        <fullName evidence="8">Flavin-dependent oxidoreductase FOX5</fullName>
        <ecNumber evidence="9">1.-.-.-</ecNumber>
    </alternativeName>
</protein>
<accession>Q9FZC8</accession>
<reference key="1">
    <citation type="journal article" date="2000" name="Nature">
        <title>Sequence and analysis of chromosome 1 of the plant Arabidopsis thaliana.</title>
        <authorList>
            <person name="Theologis A."/>
            <person name="Ecker J.R."/>
            <person name="Palm C.J."/>
            <person name="Federspiel N.A."/>
            <person name="Kaul S."/>
            <person name="White O."/>
            <person name="Alonso J."/>
            <person name="Altafi H."/>
            <person name="Araujo R."/>
            <person name="Bowman C.L."/>
            <person name="Brooks S.Y."/>
            <person name="Buehler E."/>
            <person name="Chan A."/>
            <person name="Chao Q."/>
            <person name="Chen H."/>
            <person name="Cheuk R.F."/>
            <person name="Chin C.W."/>
            <person name="Chung M.K."/>
            <person name="Conn L."/>
            <person name="Conway A.B."/>
            <person name="Conway A.R."/>
            <person name="Creasy T.H."/>
            <person name="Dewar K."/>
            <person name="Dunn P."/>
            <person name="Etgu P."/>
            <person name="Feldblyum T.V."/>
            <person name="Feng J.-D."/>
            <person name="Fong B."/>
            <person name="Fujii C.Y."/>
            <person name="Gill J.E."/>
            <person name="Goldsmith A.D."/>
            <person name="Haas B."/>
            <person name="Hansen N.F."/>
            <person name="Hughes B."/>
            <person name="Huizar L."/>
            <person name="Hunter J.L."/>
            <person name="Jenkins J."/>
            <person name="Johnson-Hopson C."/>
            <person name="Khan S."/>
            <person name="Khaykin E."/>
            <person name="Kim C.J."/>
            <person name="Koo H.L."/>
            <person name="Kremenetskaia I."/>
            <person name="Kurtz D.B."/>
            <person name="Kwan A."/>
            <person name="Lam B."/>
            <person name="Langin-Hooper S."/>
            <person name="Lee A."/>
            <person name="Lee J.M."/>
            <person name="Lenz C.A."/>
            <person name="Li J.H."/>
            <person name="Li Y.-P."/>
            <person name="Lin X."/>
            <person name="Liu S.X."/>
            <person name="Liu Z.A."/>
            <person name="Luros J.S."/>
            <person name="Maiti R."/>
            <person name="Marziali A."/>
            <person name="Militscher J."/>
            <person name="Miranda M."/>
            <person name="Nguyen M."/>
            <person name="Nierman W.C."/>
            <person name="Osborne B.I."/>
            <person name="Pai G."/>
            <person name="Peterson J."/>
            <person name="Pham P.K."/>
            <person name="Rizzo M."/>
            <person name="Rooney T."/>
            <person name="Rowley D."/>
            <person name="Sakano H."/>
            <person name="Salzberg S.L."/>
            <person name="Schwartz J.R."/>
            <person name="Shinn P."/>
            <person name="Southwick A.M."/>
            <person name="Sun H."/>
            <person name="Tallon L.J."/>
            <person name="Tambunga G."/>
            <person name="Toriumi M.J."/>
            <person name="Town C.D."/>
            <person name="Utterback T."/>
            <person name="Van Aken S."/>
            <person name="Vaysberg M."/>
            <person name="Vysotskaia V.S."/>
            <person name="Walker M."/>
            <person name="Wu D."/>
            <person name="Yu G."/>
            <person name="Fraser C.M."/>
            <person name="Venter J.C."/>
            <person name="Davis R.W."/>
        </authorList>
    </citation>
    <scope>NUCLEOTIDE SEQUENCE [LARGE SCALE GENOMIC DNA]</scope>
    <source>
        <strain>cv. Columbia</strain>
    </source>
</reference>
<reference key="2">
    <citation type="journal article" date="2017" name="Plant J.">
        <title>Araport11: a complete reannotation of the Arabidopsis thaliana reference genome.</title>
        <authorList>
            <person name="Cheng C.Y."/>
            <person name="Krishnakumar V."/>
            <person name="Chan A.P."/>
            <person name="Thibaud-Nissen F."/>
            <person name="Schobel S."/>
            <person name="Town C.D."/>
        </authorList>
    </citation>
    <scope>GENOME REANNOTATION</scope>
    <source>
        <strain>cv. Columbia</strain>
    </source>
</reference>
<reference key="3">
    <citation type="journal article" date="2015" name="J. Biol. Chem.">
        <title>Oxidation of monolignols by members of the berberine bridge enzyme family suggests a role in plant cell wall metabolism.</title>
        <authorList>
            <person name="Daniel B."/>
            <person name="Pavkov-Keller T."/>
            <person name="Steiner B."/>
            <person name="Dordic A."/>
            <person name="Gutmann A."/>
            <person name="Nidetzky B."/>
            <person name="Sensen C.W."/>
            <person name="van der Graaff E."/>
            <person name="Wallner S."/>
            <person name="Gruber K."/>
            <person name="Macheroux P."/>
        </authorList>
    </citation>
    <scope>GENE FAMILY</scope>
    <scope>NOMENCLATURE</scope>
</reference>
<reference key="4">
    <citation type="journal article" date="2015" name="Nature">
        <title>A new cyanogenic metabolite in Arabidopsis required for inducible pathogen defence.</title>
        <authorList>
            <person name="Rajniak J."/>
            <person name="Barco B."/>
            <person name="Clay N.K."/>
            <person name="Sattely E.S."/>
        </authorList>
    </citation>
    <scope>DISRUPTION PHENOTYPE</scope>
</reference>
<evidence type="ECO:0000250" key="1">
    <source>
        <dbReference type="UniProtKB" id="O64743"/>
    </source>
</evidence>
<evidence type="ECO:0000250" key="2">
    <source>
        <dbReference type="UniProtKB" id="P30986"/>
    </source>
</evidence>
<evidence type="ECO:0000255" key="3"/>
<evidence type="ECO:0000255" key="4">
    <source>
        <dbReference type="PROSITE-ProRule" id="PRU00498"/>
    </source>
</evidence>
<evidence type="ECO:0000255" key="5">
    <source>
        <dbReference type="PROSITE-ProRule" id="PRU00718"/>
    </source>
</evidence>
<evidence type="ECO:0000269" key="6">
    <source>
    </source>
</evidence>
<evidence type="ECO:0000303" key="7">
    <source>
    </source>
</evidence>
<evidence type="ECO:0000303" key="8">
    <source>
    </source>
</evidence>
<evidence type="ECO:0000305" key="9"/>
<evidence type="ECO:0000312" key="10">
    <source>
        <dbReference type="Araport" id="AT1G26420"/>
    </source>
</evidence>
<evidence type="ECO:0000312" key="11">
    <source>
        <dbReference type="EMBL" id="AAF98574.1"/>
    </source>
</evidence>
<sequence length="529" mass="59217">MKEALSILCLALLVSVSEAEVTKPNSENFIECLRYRTSSENPITDSISIADNTTTFLSSYLSYTKNKRYSSPNFKKLLAIVAAKHVSHVQATVVCAKTNGIQLRIRSGGHDLEGLSYRSSVPFVILDMFNLRSITVNVLSKKAWVQAGATLGELYVKINEASQTLAFPAGVCPTVGVGGHISGGGYGNLMRKFGITVDHVSDAQLIDVNGKLLNRASMGEDLFWAIRGGGGASFGVILSWKINLVKVPKILTVFKVNKTLEQGGTDVLYKWQLVATKFPEDLFMRAWPQIINGAERGDRTIAVVFYAQFLGPADKLLAIMNQRLPELGLRREDCHEMSWFNTTLFWADYPAGTPKSVLLDRPTNPGFFKSKSDYVKKPIPKEGLEKLWKTMFKFNNIVWMQFNPYGGVMDQIPSTATAFPHRKGNMFKVQYSTTWLAANATEISLSMMKELYKVAEPYVSSNPREAFFNYRDIDIGSNPSDETNVDEAKIYGYKYFLGNLKRLMQVKAKYDPENFFKNEQSIPPVRVIE</sequence>
<comment type="function">
    <text evidence="9">Probable flavin-dependent oxidoreductase.</text>
</comment>
<comment type="cofactor">
    <cofactor evidence="1">
        <name>FAD</name>
        <dbReference type="ChEBI" id="CHEBI:57692"/>
    </cofactor>
    <text evidence="1">Binds 1 FAD per subunit in a bicovalent manner.</text>
</comment>
<comment type="subcellular location">
    <subcellularLocation>
        <location evidence="1">Secreted</location>
        <location evidence="1">Cell wall</location>
    </subcellularLocation>
</comment>
<comment type="PTM">
    <text evidence="1">The FAD cofactor is bound via a bicovalent 6-S-cysteinyl, 8alpha-N1-histidyl FAD linkage.</text>
</comment>
<comment type="disruption phenotype">
    <text evidence="6">No effect on the levels of ICN metabolites.</text>
</comment>
<comment type="similarity">
    <text evidence="9">Belongs to the oxygen-dependent FAD-linked oxidoreductase family.</text>
</comment>
<name>FOX5_ARATH</name>
<dbReference type="EC" id="1.1.1.-" evidence="1"/>
<dbReference type="EC" id="1.-.-.-" evidence="9"/>
<dbReference type="EMBL" id="AC013427">
    <property type="protein sequence ID" value="AAF98574.1"/>
    <property type="molecule type" value="Genomic_DNA"/>
</dbReference>
<dbReference type="EMBL" id="CP002684">
    <property type="protein sequence ID" value="AEE30688.1"/>
    <property type="molecule type" value="Genomic_DNA"/>
</dbReference>
<dbReference type="PIR" id="A86391">
    <property type="entry name" value="A86391"/>
</dbReference>
<dbReference type="RefSeq" id="NP_173966.1">
    <property type="nucleotide sequence ID" value="NM_102406.3"/>
</dbReference>
<dbReference type="SMR" id="Q9FZC8"/>
<dbReference type="FunCoup" id="Q9FZC8">
    <property type="interactions" value="3"/>
</dbReference>
<dbReference type="STRING" id="3702.Q9FZC8"/>
<dbReference type="GlyCosmos" id="Q9FZC8">
    <property type="glycosylation" value="4 sites, No reported glycans"/>
</dbReference>
<dbReference type="GlyGen" id="Q9FZC8">
    <property type="glycosylation" value="5 sites"/>
</dbReference>
<dbReference type="PaxDb" id="3702-AT1G26420.1"/>
<dbReference type="ProteomicsDB" id="228883"/>
<dbReference type="EnsemblPlants" id="AT1G26420.1">
    <property type="protein sequence ID" value="AT1G26420.1"/>
    <property type="gene ID" value="AT1G26420"/>
</dbReference>
<dbReference type="GeneID" id="839184"/>
<dbReference type="Gramene" id="AT1G26420.1">
    <property type="protein sequence ID" value="AT1G26420.1"/>
    <property type="gene ID" value="AT1G26420"/>
</dbReference>
<dbReference type="KEGG" id="ath:AT1G26420"/>
<dbReference type="Araport" id="AT1G26420"/>
<dbReference type="TAIR" id="AT1G26420">
    <property type="gene designation" value="ATBBE7"/>
</dbReference>
<dbReference type="eggNOG" id="ENOG502QVGN">
    <property type="taxonomic scope" value="Eukaryota"/>
</dbReference>
<dbReference type="HOGENOM" id="CLU_018354_6_0_1"/>
<dbReference type="InParanoid" id="Q9FZC8"/>
<dbReference type="OMA" id="SANFIEC"/>
<dbReference type="PhylomeDB" id="Q9FZC8"/>
<dbReference type="BioCyc" id="ARA:AT1G26420-MONOMER"/>
<dbReference type="PRO" id="PR:Q9FZC8"/>
<dbReference type="Proteomes" id="UP000006548">
    <property type="component" value="Chromosome 1"/>
</dbReference>
<dbReference type="ExpressionAtlas" id="Q9FZC8">
    <property type="expression patterns" value="baseline and differential"/>
</dbReference>
<dbReference type="GO" id="GO:0005576">
    <property type="term" value="C:extracellular region"/>
    <property type="evidence" value="ECO:0007669"/>
    <property type="project" value="UniProtKB-KW"/>
</dbReference>
<dbReference type="GO" id="GO:0009505">
    <property type="term" value="C:plant-type cell wall"/>
    <property type="evidence" value="ECO:0000250"/>
    <property type="project" value="UniProtKB"/>
</dbReference>
<dbReference type="GO" id="GO:0071949">
    <property type="term" value="F:FAD binding"/>
    <property type="evidence" value="ECO:0007669"/>
    <property type="project" value="InterPro"/>
</dbReference>
<dbReference type="GO" id="GO:0016491">
    <property type="term" value="F:oxidoreductase activity"/>
    <property type="evidence" value="ECO:0007669"/>
    <property type="project" value="UniProtKB-KW"/>
</dbReference>
<dbReference type="FunFam" id="3.30.43.10:FF:000004">
    <property type="entry name" value="Berberine bridge enzyme-like 15"/>
    <property type="match status" value="1"/>
</dbReference>
<dbReference type="Gene3D" id="3.30.465.10">
    <property type="match status" value="1"/>
</dbReference>
<dbReference type="Gene3D" id="3.40.462.20">
    <property type="match status" value="1"/>
</dbReference>
<dbReference type="Gene3D" id="3.30.43.10">
    <property type="entry name" value="Uridine Diphospho-n-acetylenolpyruvylglucosamine Reductase, domain 2"/>
    <property type="match status" value="1"/>
</dbReference>
<dbReference type="InterPro" id="IPR012951">
    <property type="entry name" value="BBE"/>
</dbReference>
<dbReference type="InterPro" id="IPR016166">
    <property type="entry name" value="FAD-bd_PCMH"/>
</dbReference>
<dbReference type="InterPro" id="IPR036318">
    <property type="entry name" value="FAD-bd_PCMH-like_sf"/>
</dbReference>
<dbReference type="InterPro" id="IPR016167">
    <property type="entry name" value="FAD-bd_PCMH_sub1"/>
</dbReference>
<dbReference type="InterPro" id="IPR016169">
    <property type="entry name" value="FAD-bd_PCMH_sub2"/>
</dbReference>
<dbReference type="InterPro" id="IPR006094">
    <property type="entry name" value="Oxid_FAD_bind_N"/>
</dbReference>
<dbReference type="PANTHER" id="PTHR32448">
    <property type="entry name" value="OS08G0158400 PROTEIN"/>
    <property type="match status" value="1"/>
</dbReference>
<dbReference type="Pfam" id="PF08031">
    <property type="entry name" value="BBE"/>
    <property type="match status" value="1"/>
</dbReference>
<dbReference type="Pfam" id="PF01565">
    <property type="entry name" value="FAD_binding_4"/>
    <property type="match status" value="1"/>
</dbReference>
<dbReference type="SUPFAM" id="SSF56176">
    <property type="entry name" value="FAD-binding/transporter-associated domain-like"/>
    <property type="match status" value="1"/>
</dbReference>
<dbReference type="PROSITE" id="PS51387">
    <property type="entry name" value="FAD_PCMH"/>
    <property type="match status" value="1"/>
</dbReference>
<keyword id="KW-0134">Cell wall</keyword>
<keyword id="KW-1015">Disulfide bond</keyword>
<keyword id="KW-0274">FAD</keyword>
<keyword id="KW-0285">Flavoprotein</keyword>
<keyword id="KW-0325">Glycoprotein</keyword>
<keyword id="KW-0547">Nucleotide-binding</keyword>
<keyword id="KW-0560">Oxidoreductase</keyword>
<keyword id="KW-1185">Reference proteome</keyword>
<keyword id="KW-0964">Secreted</keyword>
<keyword id="KW-0732">Signal</keyword>